<proteinExistence type="evidence at protein level"/>
<protein>
    <recommendedName>
        <fullName>Cytochrome c oxidase subunit 7, mitochondrial</fullName>
    </recommendedName>
    <alternativeName>
        <fullName>Cytochrome c oxidase polypeptide VII</fullName>
    </alternativeName>
    <alternativeName>
        <fullName evidence="4">Cytochrome c oxidase subunit Cox7</fullName>
    </alternativeName>
</protein>
<accession>Q7S7U5</accession>
<feature type="chain" id="PRO_0000448900" description="Cytochrome c oxidase subunit 7, mitochondrial">
    <location>
        <begin position="1"/>
        <end position="71"/>
    </location>
</feature>
<feature type="topological domain" description="Mitochondrial matrix" evidence="3">
    <location>
        <begin position="1"/>
        <end position="35"/>
    </location>
</feature>
<feature type="transmembrane region" description="Helical" evidence="3">
    <location>
        <begin position="36"/>
        <end position="58"/>
    </location>
</feature>
<feature type="topological domain" description="Mitochondrial intermembrane" evidence="3">
    <location>
        <begin position="59"/>
        <end position="71"/>
    </location>
</feature>
<dbReference type="EMBL" id="CM002240">
    <property type="protein sequence ID" value="EAA32034.2"/>
    <property type="molecule type" value="Genomic_DNA"/>
</dbReference>
<dbReference type="RefSeq" id="XP_961270.2">
    <property type="nucleotide sequence ID" value="XM_956177.2"/>
</dbReference>
<dbReference type="SMR" id="Q7S7U5"/>
<dbReference type="STRING" id="367110.Q7S7U5"/>
<dbReference type="PaxDb" id="5141-EFNCRP00000003869"/>
<dbReference type="EnsemblFungi" id="EAA32034">
    <property type="protein sequence ID" value="EAA32034"/>
    <property type="gene ID" value="NCU04114"/>
</dbReference>
<dbReference type="GeneID" id="3877434"/>
<dbReference type="KEGG" id="ncr:NCU04114"/>
<dbReference type="VEuPathDB" id="FungiDB:NCU04114"/>
<dbReference type="HOGENOM" id="CLU_2333554_0_0_1"/>
<dbReference type="InParanoid" id="Q7S7U5"/>
<dbReference type="OrthoDB" id="5511599at2759"/>
<dbReference type="UniPathway" id="UPA00705"/>
<dbReference type="Proteomes" id="UP000001805">
    <property type="component" value="Chromosome 2, Linkage Group V"/>
</dbReference>
<dbReference type="GO" id="GO:0005743">
    <property type="term" value="C:mitochondrial inner membrane"/>
    <property type="evidence" value="ECO:0007669"/>
    <property type="project" value="UniProtKB-SubCell"/>
</dbReference>
<dbReference type="GO" id="GO:0006119">
    <property type="term" value="P:oxidative phosphorylation"/>
    <property type="evidence" value="ECO:0007669"/>
    <property type="project" value="UniProtKB-UniPathway"/>
</dbReference>
<dbReference type="InterPro" id="IPR039297">
    <property type="entry name" value="COX7a"/>
</dbReference>
<dbReference type="Pfam" id="PF02238">
    <property type="entry name" value="COX7a"/>
    <property type="match status" value="1"/>
</dbReference>
<name>COX7_NEUCR</name>
<gene>
    <name type="ORF">NCU04114</name>
</gene>
<comment type="function">
    <text evidence="1">Component of the cytochrome c oxidase, the last enzyme in the mitochondrial electron transport chain which drives oxidative phosphorylation. The respiratory chain contains 3 multisubunit complexes succinate dehydrogenase (complex II, CII), ubiquinol-cytochrome c oxidoreductase (cytochrome b-c1 complex, complex III, CIII) and cytochrome c oxidase (complex IV, CIV), that cooperate to transfer electrons derived from NADH and succinate to molecular oxygen, creating an electrochemical gradient over the inner membrane that drives transmembrane transport and the ATP synthase. Cytochrome c oxidase is the component of the respiratory chain that catalyzes the reduction of oxygen to water. Electrons originating from reduced cytochrome c in the intermembrane space (IMS) are transferred via the dinuclear copper A center (CU(A)) of Cox2 and heme A of Cox1 to the active site in Cox1, a binuclear center (BNC) formed by heme A3 and copper B (CU(B)). The BNC reduces molecular oxygen to 2 water molecules using 4 electrons from cytochrome c in the IMS and 4 protons from the mitochondrial matrix.</text>
</comment>
<comment type="pathway">
    <text evidence="1">Energy metabolism; oxidative phosphorylation.</text>
</comment>
<comment type="subunit">
    <text evidence="2 3">Component of the cytochrome c oxidase (complex IV, CIV), a multisubunit enzyme composed of 11 subunits. The complex is composed of a catalytic core of 3 subunits Cox1, Cox2 and Cox3, encoded in the mitochondrial DNA, and 8 supernumerary subunits Cox4, Cox5a/Cox5, Cox6, Cox7, Cox8, Cox7a/Cox9, Cox6b/Cox12 and Cox6a/Cox13, which are encoded in the nuclear genome (PubMed:31316820). The complex exists as a monomer or a dimer and forms respiratory supercomplexes (SCs) in the inner mitochondrial membrane with NADH-ubiquinone oxidoreductase (complex I, CI) and ubiquinol-cytochrome c oxidoreductase (cytochrome b-c1 complex, complex III, CIII), resulting in various different assemblies (supercomplexes I(1)IV(1), I(1)III(3)IV(2), III(2)IV(1) and III(2)IV(2) as well as larger supercomplexes of compositions like I(1)III(2)IV(5-6)) (PubMed:17873079).</text>
</comment>
<comment type="subcellular location">
    <subcellularLocation>
        <location evidence="3">Mitochondrion inner membrane</location>
        <topology evidence="3">Single-pass membrane protein</topology>
    </subcellularLocation>
</comment>
<comment type="similarity">
    <text evidence="5">Belongs to the cytochrome c oxidase VIIa family.</text>
</comment>
<sequence>MPGLVNAPNHVPEKQRYYQQAFKNHTRLWKIGPRSGIIMTTFNIAMWGTFGASMYAMSRKVLGYNTWFSED</sequence>
<organism>
    <name type="scientific">Neurospora crassa (strain ATCC 24698 / 74-OR23-1A / CBS 708.71 / DSM 1257 / FGSC 987)</name>
    <dbReference type="NCBI Taxonomy" id="367110"/>
    <lineage>
        <taxon>Eukaryota</taxon>
        <taxon>Fungi</taxon>
        <taxon>Dikarya</taxon>
        <taxon>Ascomycota</taxon>
        <taxon>Pezizomycotina</taxon>
        <taxon>Sordariomycetes</taxon>
        <taxon>Sordariomycetidae</taxon>
        <taxon>Sordariales</taxon>
        <taxon>Sordariaceae</taxon>
        <taxon>Neurospora</taxon>
    </lineage>
</organism>
<reference key="1">
    <citation type="journal article" date="2003" name="Nature">
        <title>The genome sequence of the filamentous fungus Neurospora crassa.</title>
        <authorList>
            <person name="Galagan J.E."/>
            <person name="Calvo S.E."/>
            <person name="Borkovich K.A."/>
            <person name="Selker E.U."/>
            <person name="Read N.D."/>
            <person name="Jaffe D.B."/>
            <person name="FitzHugh W."/>
            <person name="Ma L.-J."/>
            <person name="Smirnov S."/>
            <person name="Purcell S."/>
            <person name="Rehman B."/>
            <person name="Elkins T."/>
            <person name="Engels R."/>
            <person name="Wang S."/>
            <person name="Nielsen C.B."/>
            <person name="Butler J."/>
            <person name="Endrizzi M."/>
            <person name="Qui D."/>
            <person name="Ianakiev P."/>
            <person name="Bell-Pedersen D."/>
            <person name="Nelson M.A."/>
            <person name="Werner-Washburne M."/>
            <person name="Selitrennikoff C.P."/>
            <person name="Kinsey J.A."/>
            <person name="Braun E.L."/>
            <person name="Zelter A."/>
            <person name="Schulte U."/>
            <person name="Kothe G.O."/>
            <person name="Jedd G."/>
            <person name="Mewes H.-W."/>
            <person name="Staben C."/>
            <person name="Marcotte E."/>
            <person name="Greenberg D."/>
            <person name="Roy A."/>
            <person name="Foley K."/>
            <person name="Naylor J."/>
            <person name="Stange-Thomann N."/>
            <person name="Barrett R."/>
            <person name="Gnerre S."/>
            <person name="Kamal M."/>
            <person name="Kamvysselis M."/>
            <person name="Mauceli E.W."/>
            <person name="Bielke C."/>
            <person name="Rudd S."/>
            <person name="Frishman D."/>
            <person name="Krystofova S."/>
            <person name="Rasmussen C."/>
            <person name="Metzenberg R.L."/>
            <person name="Perkins D.D."/>
            <person name="Kroken S."/>
            <person name="Cogoni C."/>
            <person name="Macino G."/>
            <person name="Catcheside D.E.A."/>
            <person name="Li W."/>
            <person name="Pratt R.J."/>
            <person name="Osmani S.A."/>
            <person name="DeSouza C.P.C."/>
            <person name="Glass N.L."/>
            <person name="Orbach M.J."/>
            <person name="Berglund J.A."/>
            <person name="Voelker R."/>
            <person name="Yarden O."/>
            <person name="Plamann M."/>
            <person name="Seiler S."/>
            <person name="Dunlap J.C."/>
            <person name="Radford A."/>
            <person name="Aramayo R."/>
            <person name="Natvig D.O."/>
            <person name="Alex L.A."/>
            <person name="Mannhaupt G."/>
            <person name="Ebbole D.J."/>
            <person name="Freitag M."/>
            <person name="Paulsen I."/>
            <person name="Sachs M.S."/>
            <person name="Lander E.S."/>
            <person name="Nusbaum C."/>
            <person name="Birren B.W."/>
        </authorList>
    </citation>
    <scope>NUCLEOTIDE SEQUENCE [LARGE SCALE GENOMIC DNA]</scope>
    <source>
        <strain>ATCC 24698 / 74-OR23-1A / CBS 708.71 / DSM 1257 / FGSC 987</strain>
    </source>
</reference>
<reference key="2">
    <citation type="journal article" date="2007" name="Eukaryot. Cell">
        <title>Supramolecular organization of the respiratory chain in Neurospora crassa mitochondria.</title>
        <authorList>
            <person name="Marques I."/>
            <person name="Dencher N.A."/>
            <person name="Videira A."/>
            <person name="Krause F."/>
        </authorList>
    </citation>
    <scope>COMPOSITION OF THE CYTOCHROME C OXIDASE COMPLEX</scope>
</reference>
<reference key="3">
    <citation type="journal article" date="2019" name="IUCrJ">
        <title>Cryo-EM structure of Neurospora crassa respiratory complex IV.</title>
        <authorList>
            <person name="Bausewein T."/>
            <person name="Nussberger S."/>
            <person name="Kuehlbrandt W."/>
        </authorList>
    </citation>
    <scope>STRUCTURE BY ELECTRON MICROSCOPY (5.5 ANGSTROMS)</scope>
    <scope>SUBUNIT</scope>
</reference>
<evidence type="ECO:0000250" key="1">
    <source>
        <dbReference type="UniProtKB" id="P10174"/>
    </source>
</evidence>
<evidence type="ECO:0000269" key="2">
    <source>
    </source>
</evidence>
<evidence type="ECO:0000269" key="3">
    <source>
    </source>
</evidence>
<evidence type="ECO:0000303" key="4">
    <source>
    </source>
</evidence>
<evidence type="ECO:0000305" key="5"/>
<keyword id="KW-0472">Membrane</keyword>
<keyword id="KW-0496">Mitochondrion</keyword>
<keyword id="KW-0999">Mitochondrion inner membrane</keyword>
<keyword id="KW-1185">Reference proteome</keyword>
<keyword id="KW-0812">Transmembrane</keyword>
<keyword id="KW-1133">Transmembrane helix</keyword>